<accession>Q4ZMR5</accession>
<evidence type="ECO:0000255" key="1">
    <source>
        <dbReference type="HAMAP-Rule" id="MF_01315"/>
    </source>
</evidence>
<evidence type="ECO:0000256" key="2">
    <source>
        <dbReference type="SAM" id="MobiDB-lite"/>
    </source>
</evidence>
<evidence type="ECO:0000305" key="3"/>
<protein>
    <recommendedName>
        <fullName evidence="1">Small ribosomal subunit protein uS13</fullName>
    </recommendedName>
    <alternativeName>
        <fullName evidence="3">30S ribosomal protein S13</fullName>
    </alternativeName>
</protein>
<organism>
    <name type="scientific">Pseudomonas syringae pv. syringae (strain B728a)</name>
    <dbReference type="NCBI Taxonomy" id="205918"/>
    <lineage>
        <taxon>Bacteria</taxon>
        <taxon>Pseudomonadati</taxon>
        <taxon>Pseudomonadota</taxon>
        <taxon>Gammaproteobacteria</taxon>
        <taxon>Pseudomonadales</taxon>
        <taxon>Pseudomonadaceae</taxon>
        <taxon>Pseudomonas</taxon>
        <taxon>Pseudomonas syringae</taxon>
    </lineage>
</organism>
<comment type="function">
    <text evidence="1">Located at the top of the head of the 30S subunit, it contacts several helices of the 16S rRNA. In the 70S ribosome it contacts the 23S rRNA (bridge B1a) and protein L5 of the 50S subunit (bridge B1b), connecting the 2 subunits; these bridges are implicated in subunit movement. Contacts the tRNAs in the A and P-sites.</text>
</comment>
<comment type="subunit">
    <text evidence="1">Part of the 30S ribosomal subunit. Forms a loose heterodimer with protein S19. Forms two bridges to the 50S subunit in the 70S ribosome.</text>
</comment>
<comment type="similarity">
    <text evidence="1">Belongs to the universal ribosomal protein uS13 family.</text>
</comment>
<reference key="1">
    <citation type="journal article" date="2005" name="Proc. Natl. Acad. Sci. U.S.A.">
        <title>Comparison of the complete genome sequences of Pseudomonas syringae pv. syringae B728a and pv. tomato DC3000.</title>
        <authorList>
            <person name="Feil H."/>
            <person name="Feil W.S."/>
            <person name="Chain P."/>
            <person name="Larimer F."/>
            <person name="Dibartolo G."/>
            <person name="Copeland A."/>
            <person name="Lykidis A."/>
            <person name="Trong S."/>
            <person name="Nolan M."/>
            <person name="Goltsman E."/>
            <person name="Thiel J."/>
            <person name="Malfatti S."/>
            <person name="Loper J.E."/>
            <person name="Lapidus A."/>
            <person name="Detter J.C."/>
            <person name="Land M."/>
            <person name="Richardson P.M."/>
            <person name="Kyrpides N.C."/>
            <person name="Ivanova N."/>
            <person name="Lindow S.E."/>
        </authorList>
    </citation>
    <scope>NUCLEOTIDE SEQUENCE [LARGE SCALE GENOMIC DNA]</scope>
    <source>
        <strain>B728a</strain>
    </source>
</reference>
<sequence>MARIAGVNIPDNKHTVISLTYIYGVGRTTAQKICATTGVNPAVKIKDLSDEQIEQLRGEVAKFTTEGDLRREINMKIKRLMDLGCYRGLRHRRGLPVRGQRTKTNARTRKGPRKPIRK</sequence>
<feature type="chain" id="PRO_0000230554" description="Small ribosomal subunit protein uS13">
    <location>
        <begin position="1"/>
        <end position="118"/>
    </location>
</feature>
<feature type="region of interest" description="Disordered" evidence="2">
    <location>
        <begin position="93"/>
        <end position="118"/>
    </location>
</feature>
<dbReference type="EMBL" id="CP000075">
    <property type="protein sequence ID" value="AAY39557.1"/>
    <property type="molecule type" value="Genomic_DNA"/>
</dbReference>
<dbReference type="RefSeq" id="WP_002555467.1">
    <property type="nucleotide sequence ID" value="NC_007005.1"/>
</dbReference>
<dbReference type="RefSeq" id="YP_237595.1">
    <property type="nucleotide sequence ID" value="NC_007005.1"/>
</dbReference>
<dbReference type="SMR" id="Q4ZMR5"/>
<dbReference type="STRING" id="205918.Psyr_4527"/>
<dbReference type="GeneID" id="96221008"/>
<dbReference type="KEGG" id="psb:Psyr_4527"/>
<dbReference type="PATRIC" id="fig|205918.7.peg.4665"/>
<dbReference type="eggNOG" id="COG0099">
    <property type="taxonomic scope" value="Bacteria"/>
</dbReference>
<dbReference type="HOGENOM" id="CLU_103849_1_2_6"/>
<dbReference type="OrthoDB" id="9803610at2"/>
<dbReference type="Proteomes" id="UP000000426">
    <property type="component" value="Chromosome"/>
</dbReference>
<dbReference type="GO" id="GO:0005829">
    <property type="term" value="C:cytosol"/>
    <property type="evidence" value="ECO:0007669"/>
    <property type="project" value="TreeGrafter"/>
</dbReference>
<dbReference type="GO" id="GO:0015935">
    <property type="term" value="C:small ribosomal subunit"/>
    <property type="evidence" value="ECO:0007669"/>
    <property type="project" value="TreeGrafter"/>
</dbReference>
<dbReference type="GO" id="GO:0019843">
    <property type="term" value="F:rRNA binding"/>
    <property type="evidence" value="ECO:0007669"/>
    <property type="project" value="UniProtKB-UniRule"/>
</dbReference>
<dbReference type="GO" id="GO:0003735">
    <property type="term" value="F:structural constituent of ribosome"/>
    <property type="evidence" value="ECO:0007669"/>
    <property type="project" value="InterPro"/>
</dbReference>
<dbReference type="GO" id="GO:0000049">
    <property type="term" value="F:tRNA binding"/>
    <property type="evidence" value="ECO:0007669"/>
    <property type="project" value="UniProtKB-UniRule"/>
</dbReference>
<dbReference type="GO" id="GO:0006412">
    <property type="term" value="P:translation"/>
    <property type="evidence" value="ECO:0007669"/>
    <property type="project" value="UniProtKB-UniRule"/>
</dbReference>
<dbReference type="FunFam" id="1.10.8.50:FF:000001">
    <property type="entry name" value="30S ribosomal protein S13"/>
    <property type="match status" value="1"/>
</dbReference>
<dbReference type="FunFam" id="4.10.910.10:FF:000001">
    <property type="entry name" value="30S ribosomal protein S13"/>
    <property type="match status" value="1"/>
</dbReference>
<dbReference type="Gene3D" id="1.10.8.50">
    <property type="match status" value="1"/>
</dbReference>
<dbReference type="Gene3D" id="4.10.910.10">
    <property type="entry name" value="30s ribosomal protein s13, domain 2"/>
    <property type="match status" value="1"/>
</dbReference>
<dbReference type="HAMAP" id="MF_01315">
    <property type="entry name" value="Ribosomal_uS13"/>
    <property type="match status" value="1"/>
</dbReference>
<dbReference type="InterPro" id="IPR027437">
    <property type="entry name" value="Rbsml_uS13_C"/>
</dbReference>
<dbReference type="InterPro" id="IPR001892">
    <property type="entry name" value="Ribosomal_uS13"/>
</dbReference>
<dbReference type="InterPro" id="IPR010979">
    <property type="entry name" value="Ribosomal_uS13-like_H2TH"/>
</dbReference>
<dbReference type="InterPro" id="IPR019980">
    <property type="entry name" value="Ribosomal_uS13_bac-type"/>
</dbReference>
<dbReference type="InterPro" id="IPR018269">
    <property type="entry name" value="Ribosomal_uS13_CS"/>
</dbReference>
<dbReference type="NCBIfam" id="TIGR03631">
    <property type="entry name" value="uS13_bact"/>
    <property type="match status" value="1"/>
</dbReference>
<dbReference type="PANTHER" id="PTHR10871">
    <property type="entry name" value="30S RIBOSOMAL PROTEIN S13/40S RIBOSOMAL PROTEIN S18"/>
    <property type="match status" value="1"/>
</dbReference>
<dbReference type="PANTHER" id="PTHR10871:SF1">
    <property type="entry name" value="SMALL RIBOSOMAL SUBUNIT PROTEIN US13M"/>
    <property type="match status" value="1"/>
</dbReference>
<dbReference type="Pfam" id="PF00416">
    <property type="entry name" value="Ribosomal_S13"/>
    <property type="match status" value="1"/>
</dbReference>
<dbReference type="PIRSF" id="PIRSF002134">
    <property type="entry name" value="Ribosomal_S13"/>
    <property type="match status" value="1"/>
</dbReference>
<dbReference type="SUPFAM" id="SSF46946">
    <property type="entry name" value="S13-like H2TH domain"/>
    <property type="match status" value="1"/>
</dbReference>
<dbReference type="PROSITE" id="PS00646">
    <property type="entry name" value="RIBOSOMAL_S13_1"/>
    <property type="match status" value="1"/>
</dbReference>
<dbReference type="PROSITE" id="PS50159">
    <property type="entry name" value="RIBOSOMAL_S13_2"/>
    <property type="match status" value="1"/>
</dbReference>
<proteinExistence type="inferred from homology"/>
<gene>
    <name evidence="1" type="primary">rpsM</name>
    <name type="ordered locus">Psyr_4527</name>
</gene>
<name>RS13_PSEU2</name>
<keyword id="KW-0687">Ribonucleoprotein</keyword>
<keyword id="KW-0689">Ribosomal protein</keyword>
<keyword id="KW-0694">RNA-binding</keyword>
<keyword id="KW-0699">rRNA-binding</keyword>
<keyword id="KW-0820">tRNA-binding</keyword>